<proteinExistence type="inferred from homology"/>
<comment type="function">
    <text evidence="1">Component of the acetyl coenzyme A carboxylase (ACC) complex. Biotin carboxylase (BC) catalyzes the carboxylation of biotin on its carrier protein (BCCP) and then the CO(2) group is transferred by the transcarboxylase to acetyl-CoA to form malonyl-CoA.</text>
</comment>
<comment type="catalytic activity">
    <reaction evidence="1">
        <text>N(6)-carboxybiotinyl-L-lysyl-[protein] + acetyl-CoA = N(6)-biotinyl-L-lysyl-[protein] + malonyl-CoA</text>
        <dbReference type="Rhea" id="RHEA:54728"/>
        <dbReference type="Rhea" id="RHEA-COMP:10505"/>
        <dbReference type="Rhea" id="RHEA-COMP:10506"/>
        <dbReference type="ChEBI" id="CHEBI:57288"/>
        <dbReference type="ChEBI" id="CHEBI:57384"/>
        <dbReference type="ChEBI" id="CHEBI:83144"/>
        <dbReference type="ChEBI" id="CHEBI:83145"/>
        <dbReference type="EC" id="2.1.3.15"/>
    </reaction>
</comment>
<comment type="cofactor">
    <cofactor evidence="1">
        <name>Zn(2+)</name>
        <dbReference type="ChEBI" id="CHEBI:29105"/>
    </cofactor>
    <text evidence="1">Binds 1 zinc ion per subunit.</text>
</comment>
<comment type="pathway">
    <text evidence="1">Lipid metabolism; malonyl-CoA biosynthesis; malonyl-CoA from acetyl-CoA: step 1/1.</text>
</comment>
<comment type="subunit">
    <text evidence="1">Acetyl-CoA carboxylase is a heterohexamer composed of biotin carboxyl carrier protein (AccB), biotin carboxylase (AccC) and two subunits each of ACCase subunit alpha (AccA) and ACCase subunit beta (AccD).</text>
</comment>
<comment type="subcellular location">
    <subcellularLocation>
        <location evidence="1">Cytoplasm</location>
    </subcellularLocation>
</comment>
<comment type="similarity">
    <text evidence="1">Belongs to the AccD/PCCB family.</text>
</comment>
<keyword id="KW-0067">ATP-binding</keyword>
<keyword id="KW-0963">Cytoplasm</keyword>
<keyword id="KW-0275">Fatty acid biosynthesis</keyword>
<keyword id="KW-0276">Fatty acid metabolism</keyword>
<keyword id="KW-0444">Lipid biosynthesis</keyword>
<keyword id="KW-0443">Lipid metabolism</keyword>
<keyword id="KW-0479">Metal-binding</keyword>
<keyword id="KW-0547">Nucleotide-binding</keyword>
<keyword id="KW-0808">Transferase</keyword>
<keyword id="KW-0862">Zinc</keyword>
<keyword id="KW-0863">Zinc-finger</keyword>
<feature type="chain" id="PRO_0000358952" description="Acetyl-coenzyme A carboxylase carboxyl transferase subunit beta">
    <location>
        <begin position="1"/>
        <end position="281"/>
    </location>
</feature>
<feature type="domain" description="CoA carboxyltransferase N-terminal" evidence="2">
    <location>
        <begin position="23"/>
        <end position="281"/>
    </location>
</feature>
<feature type="zinc finger region" description="C4-type" evidence="1">
    <location>
        <begin position="27"/>
        <end position="49"/>
    </location>
</feature>
<feature type="binding site" evidence="1">
    <location>
        <position position="27"/>
    </location>
    <ligand>
        <name>Zn(2+)</name>
        <dbReference type="ChEBI" id="CHEBI:29105"/>
    </ligand>
</feature>
<feature type="binding site" evidence="1">
    <location>
        <position position="30"/>
    </location>
    <ligand>
        <name>Zn(2+)</name>
        <dbReference type="ChEBI" id="CHEBI:29105"/>
    </ligand>
</feature>
<feature type="binding site" evidence="1">
    <location>
        <position position="46"/>
    </location>
    <ligand>
        <name>Zn(2+)</name>
        <dbReference type="ChEBI" id="CHEBI:29105"/>
    </ligand>
</feature>
<feature type="binding site" evidence="1">
    <location>
        <position position="49"/>
    </location>
    <ligand>
        <name>Zn(2+)</name>
        <dbReference type="ChEBI" id="CHEBI:29105"/>
    </ligand>
</feature>
<reference key="1">
    <citation type="journal article" date="2008" name="ISME J.">
        <title>Comparative genomics of two ecotypes of the marine planktonic copiotroph Alteromonas macleodii suggests alternative lifestyles associated with different kinds of particulate organic matter.</title>
        <authorList>
            <person name="Ivars-Martinez E."/>
            <person name="Martin-Cuadrado A.-B."/>
            <person name="D'Auria G."/>
            <person name="Mira A."/>
            <person name="Ferriera S."/>
            <person name="Johnson J."/>
            <person name="Friedman R."/>
            <person name="Rodriguez-Valera F."/>
        </authorList>
    </citation>
    <scope>NUCLEOTIDE SEQUENCE [LARGE SCALE GENOMIC DNA]</scope>
    <source>
        <strain>DSM 17117 / CIP 110805 / LMG 28347 / Deep ecotype</strain>
    </source>
</reference>
<protein>
    <recommendedName>
        <fullName evidence="1">Acetyl-coenzyme A carboxylase carboxyl transferase subunit beta</fullName>
        <shortName evidence="1">ACCase subunit beta</shortName>
        <shortName evidence="1">Acetyl-CoA carboxylase carboxyltransferase subunit beta</shortName>
        <ecNumber evidence="1">2.1.3.15</ecNumber>
    </recommendedName>
</protein>
<evidence type="ECO:0000255" key="1">
    <source>
        <dbReference type="HAMAP-Rule" id="MF_01395"/>
    </source>
</evidence>
<evidence type="ECO:0000255" key="2">
    <source>
        <dbReference type="PROSITE-ProRule" id="PRU01136"/>
    </source>
</evidence>
<gene>
    <name evidence="1" type="primary">accD</name>
    <name type="ordered locus">MADE_1011895</name>
</gene>
<accession>B4RUR0</accession>
<accession>F2G5Z7</accession>
<sequence length="281" mass="31078">MSWIQKILPRTQTSHKGNVPEGIWTKCGSCQAVLYKSELEKLQEVCPKCDHHMRITARRRIDAFLDDGDRVELGAEHEPQDVLKFKDSKRYKDRIVAAQKSTNEKDALVVMQGKLKGMPVVVACFEFAFMGGSMASVVGARFVAAVNACLENDMPLICFSASGGARMQEALMSLMQMAKTSAALAKMSKKGLPYISVLTDPTMGGVSASLAMLGDINVAEPKALIGFAGPRVIEQTVREKLPEGFQRSEFLVEKGAIDMIVDRRDMRDRLHSLLVKLHYKN</sequence>
<name>ACCD_ALTMD</name>
<dbReference type="EC" id="2.1.3.15" evidence="1"/>
<dbReference type="EMBL" id="CP001103">
    <property type="protein sequence ID" value="AEA98515.1"/>
    <property type="molecule type" value="Genomic_DNA"/>
</dbReference>
<dbReference type="RefSeq" id="WP_012518833.1">
    <property type="nucleotide sequence ID" value="NC_011138.3"/>
</dbReference>
<dbReference type="SMR" id="B4RUR0"/>
<dbReference type="KEGG" id="amc:MADE_1011895"/>
<dbReference type="HOGENOM" id="CLU_015486_1_0_6"/>
<dbReference type="UniPathway" id="UPA00655">
    <property type="reaction ID" value="UER00711"/>
</dbReference>
<dbReference type="Proteomes" id="UP000001870">
    <property type="component" value="Chromosome"/>
</dbReference>
<dbReference type="GO" id="GO:0009329">
    <property type="term" value="C:acetate CoA-transferase complex"/>
    <property type="evidence" value="ECO:0007669"/>
    <property type="project" value="TreeGrafter"/>
</dbReference>
<dbReference type="GO" id="GO:0003989">
    <property type="term" value="F:acetyl-CoA carboxylase activity"/>
    <property type="evidence" value="ECO:0007669"/>
    <property type="project" value="InterPro"/>
</dbReference>
<dbReference type="GO" id="GO:0005524">
    <property type="term" value="F:ATP binding"/>
    <property type="evidence" value="ECO:0007669"/>
    <property type="project" value="UniProtKB-KW"/>
</dbReference>
<dbReference type="GO" id="GO:0016743">
    <property type="term" value="F:carboxyl- or carbamoyltransferase activity"/>
    <property type="evidence" value="ECO:0007669"/>
    <property type="project" value="UniProtKB-UniRule"/>
</dbReference>
<dbReference type="GO" id="GO:0008270">
    <property type="term" value="F:zinc ion binding"/>
    <property type="evidence" value="ECO:0007669"/>
    <property type="project" value="UniProtKB-UniRule"/>
</dbReference>
<dbReference type="GO" id="GO:0006633">
    <property type="term" value="P:fatty acid biosynthetic process"/>
    <property type="evidence" value="ECO:0007669"/>
    <property type="project" value="UniProtKB-KW"/>
</dbReference>
<dbReference type="GO" id="GO:2001295">
    <property type="term" value="P:malonyl-CoA biosynthetic process"/>
    <property type="evidence" value="ECO:0007669"/>
    <property type="project" value="UniProtKB-UniRule"/>
</dbReference>
<dbReference type="Gene3D" id="3.90.226.10">
    <property type="entry name" value="2-enoyl-CoA Hydratase, Chain A, domain 1"/>
    <property type="match status" value="1"/>
</dbReference>
<dbReference type="HAMAP" id="MF_01395">
    <property type="entry name" value="AcetylCoA_CT_beta"/>
    <property type="match status" value="1"/>
</dbReference>
<dbReference type="InterPro" id="IPR034733">
    <property type="entry name" value="AcCoA_carboxyl_beta"/>
</dbReference>
<dbReference type="InterPro" id="IPR000438">
    <property type="entry name" value="Acetyl_CoA_COase_Trfase_b_su"/>
</dbReference>
<dbReference type="InterPro" id="IPR029045">
    <property type="entry name" value="ClpP/crotonase-like_dom_sf"/>
</dbReference>
<dbReference type="InterPro" id="IPR011762">
    <property type="entry name" value="COA_CT_N"/>
</dbReference>
<dbReference type="InterPro" id="IPR041010">
    <property type="entry name" value="Znf-ACC"/>
</dbReference>
<dbReference type="NCBIfam" id="TIGR00515">
    <property type="entry name" value="accD"/>
    <property type="match status" value="1"/>
</dbReference>
<dbReference type="PANTHER" id="PTHR42995">
    <property type="entry name" value="ACETYL-COENZYME A CARBOXYLASE CARBOXYL TRANSFERASE SUBUNIT BETA, CHLOROPLASTIC"/>
    <property type="match status" value="1"/>
</dbReference>
<dbReference type="PANTHER" id="PTHR42995:SF5">
    <property type="entry name" value="ACETYL-COENZYME A CARBOXYLASE CARBOXYL TRANSFERASE SUBUNIT BETA, CHLOROPLASTIC"/>
    <property type="match status" value="1"/>
</dbReference>
<dbReference type="Pfam" id="PF01039">
    <property type="entry name" value="Carboxyl_trans"/>
    <property type="match status" value="1"/>
</dbReference>
<dbReference type="Pfam" id="PF17848">
    <property type="entry name" value="Zn_ribbon_ACC"/>
    <property type="match status" value="1"/>
</dbReference>
<dbReference type="PRINTS" id="PR01070">
    <property type="entry name" value="ACCCTRFRASEB"/>
</dbReference>
<dbReference type="SUPFAM" id="SSF52096">
    <property type="entry name" value="ClpP/crotonase"/>
    <property type="match status" value="1"/>
</dbReference>
<dbReference type="PROSITE" id="PS50980">
    <property type="entry name" value="COA_CT_NTER"/>
    <property type="match status" value="1"/>
</dbReference>
<organism>
    <name type="scientific">Alteromonas mediterranea (strain DSM 17117 / CIP 110805 / LMG 28347 / Deep ecotype)</name>
    <dbReference type="NCBI Taxonomy" id="1774373"/>
    <lineage>
        <taxon>Bacteria</taxon>
        <taxon>Pseudomonadati</taxon>
        <taxon>Pseudomonadota</taxon>
        <taxon>Gammaproteobacteria</taxon>
        <taxon>Alteromonadales</taxon>
        <taxon>Alteromonadaceae</taxon>
        <taxon>Alteromonas/Salinimonas group</taxon>
        <taxon>Alteromonas</taxon>
    </lineage>
</organism>